<proteinExistence type="inferred from homology"/>
<sequence>MTQRLKTFYLNTVVPKLRKQLEYQNIHQVPQVTKIVINCGLGEASQNAKSLESTLRDLSFITGQKPIVTRAKKSIAGFQIRAQMSVGVCVTLRADAMYAFLDRLIHLALPRIRDFQGLNSNSFDGHGNFHLGLKEQLMFPEIDYDKIEKLRGMDICIVTSSQNNKEALQLLVALGMPFQTTLTA</sequence>
<geneLocation type="chloroplast"/>
<evidence type="ECO:0000250" key="1"/>
<evidence type="ECO:0000305" key="2"/>
<organism>
    <name type="scientific">Zygnema circumcarinatum</name>
    <name type="common">Green alga</name>
    <dbReference type="NCBI Taxonomy" id="35869"/>
    <lineage>
        <taxon>Eukaryota</taxon>
        <taxon>Viridiplantae</taxon>
        <taxon>Streptophyta</taxon>
        <taxon>Zygnematophyceae</taxon>
        <taxon>Zygnematophycidae</taxon>
        <taxon>Zygnematales</taxon>
        <taxon>Zygnemataceae</taxon>
        <taxon>Zygnema</taxon>
    </lineage>
</organism>
<name>RK5_ZYGCR</name>
<keyword id="KW-0150">Chloroplast</keyword>
<keyword id="KW-0934">Plastid</keyword>
<keyword id="KW-0687">Ribonucleoprotein</keyword>
<keyword id="KW-0689">Ribosomal protein</keyword>
<keyword id="KW-0694">RNA-binding</keyword>
<keyword id="KW-0699">rRNA-binding</keyword>
<accession>Q32RN3</accession>
<gene>
    <name type="primary">rpl5</name>
</gene>
<protein>
    <recommendedName>
        <fullName evidence="2">Large ribosomal subunit protein uL5c</fullName>
    </recommendedName>
    <alternativeName>
        <fullName>50S ribosomal protein L5, chloroplastic</fullName>
    </alternativeName>
</protein>
<dbReference type="EMBL" id="AY958086">
    <property type="protein sequence ID" value="AAX45860.1"/>
    <property type="molecule type" value="Genomic_DNA"/>
</dbReference>
<dbReference type="RefSeq" id="YP_636493.1">
    <property type="nucleotide sequence ID" value="NC_008117.1"/>
</dbReference>
<dbReference type="SMR" id="Q32RN3"/>
<dbReference type="GeneID" id="4108180"/>
<dbReference type="GO" id="GO:0009507">
    <property type="term" value="C:chloroplast"/>
    <property type="evidence" value="ECO:0007669"/>
    <property type="project" value="UniProtKB-SubCell"/>
</dbReference>
<dbReference type="GO" id="GO:1990904">
    <property type="term" value="C:ribonucleoprotein complex"/>
    <property type="evidence" value="ECO:0007669"/>
    <property type="project" value="UniProtKB-KW"/>
</dbReference>
<dbReference type="GO" id="GO:0005840">
    <property type="term" value="C:ribosome"/>
    <property type="evidence" value="ECO:0007669"/>
    <property type="project" value="UniProtKB-KW"/>
</dbReference>
<dbReference type="GO" id="GO:0019843">
    <property type="term" value="F:rRNA binding"/>
    <property type="evidence" value="ECO:0007669"/>
    <property type="project" value="UniProtKB-UniRule"/>
</dbReference>
<dbReference type="GO" id="GO:0003735">
    <property type="term" value="F:structural constituent of ribosome"/>
    <property type="evidence" value="ECO:0007669"/>
    <property type="project" value="InterPro"/>
</dbReference>
<dbReference type="GO" id="GO:0006412">
    <property type="term" value="P:translation"/>
    <property type="evidence" value="ECO:0007669"/>
    <property type="project" value="UniProtKB-UniRule"/>
</dbReference>
<dbReference type="FunFam" id="3.30.1440.10:FF:000001">
    <property type="entry name" value="50S ribosomal protein L5"/>
    <property type="match status" value="1"/>
</dbReference>
<dbReference type="Gene3D" id="3.30.1440.10">
    <property type="match status" value="1"/>
</dbReference>
<dbReference type="HAMAP" id="MF_01333_B">
    <property type="entry name" value="Ribosomal_uL5_B"/>
    <property type="match status" value="1"/>
</dbReference>
<dbReference type="InterPro" id="IPR002132">
    <property type="entry name" value="Ribosomal_uL5"/>
</dbReference>
<dbReference type="InterPro" id="IPR020930">
    <property type="entry name" value="Ribosomal_uL5_bac-type"/>
</dbReference>
<dbReference type="InterPro" id="IPR031309">
    <property type="entry name" value="Ribosomal_uL5_C"/>
</dbReference>
<dbReference type="InterPro" id="IPR020929">
    <property type="entry name" value="Ribosomal_uL5_CS"/>
</dbReference>
<dbReference type="InterPro" id="IPR022803">
    <property type="entry name" value="Ribosomal_uL5_dom_sf"/>
</dbReference>
<dbReference type="InterPro" id="IPR031310">
    <property type="entry name" value="Ribosomal_uL5_N"/>
</dbReference>
<dbReference type="NCBIfam" id="NF000585">
    <property type="entry name" value="PRK00010.1"/>
    <property type="match status" value="1"/>
</dbReference>
<dbReference type="PANTHER" id="PTHR11994">
    <property type="entry name" value="60S RIBOSOMAL PROTEIN L11-RELATED"/>
    <property type="match status" value="1"/>
</dbReference>
<dbReference type="Pfam" id="PF00281">
    <property type="entry name" value="Ribosomal_L5"/>
    <property type="match status" value="1"/>
</dbReference>
<dbReference type="Pfam" id="PF00673">
    <property type="entry name" value="Ribosomal_L5_C"/>
    <property type="match status" value="1"/>
</dbReference>
<dbReference type="PIRSF" id="PIRSF002161">
    <property type="entry name" value="Ribosomal_L5"/>
    <property type="match status" value="1"/>
</dbReference>
<dbReference type="SUPFAM" id="SSF55282">
    <property type="entry name" value="RL5-like"/>
    <property type="match status" value="1"/>
</dbReference>
<dbReference type="PROSITE" id="PS00358">
    <property type="entry name" value="RIBOSOMAL_L5"/>
    <property type="match status" value="1"/>
</dbReference>
<comment type="function">
    <text evidence="1">Binds 5S rRNA, forms part of the central protuberance of the 50S subunit.</text>
</comment>
<comment type="subunit">
    <text evidence="1">Part of the 50S ribosomal subunit; contacts the 5S rRNA.</text>
</comment>
<comment type="subcellular location">
    <subcellularLocation>
        <location>Plastid</location>
        <location>Chloroplast</location>
    </subcellularLocation>
</comment>
<comment type="similarity">
    <text evidence="2">Belongs to the universal ribosomal protein uL5 family.</text>
</comment>
<feature type="chain" id="PRO_0000243097" description="Large ribosomal subunit protein uL5c">
    <location>
        <begin position="1"/>
        <end position="184"/>
    </location>
</feature>
<reference key="1">
    <citation type="journal article" date="2005" name="BMC Biol.">
        <title>The complete chloroplast DNA sequences of the charophycean green algae Staurastrum and Zygnema reveal that the chloroplast genome underwent extensive changes during the evolution of the Zygnematales.</title>
        <authorList>
            <person name="Turmel M."/>
            <person name="Otis C."/>
            <person name="Lemieux C."/>
        </authorList>
    </citation>
    <scope>NUCLEOTIDE SEQUENCE [LARGE SCALE GENOMIC DNA]</scope>
</reference>